<protein>
    <recommendedName>
        <fullName evidence="1">7-methyl-GTP pyrophosphatase</fullName>
        <shortName evidence="1">m(7)GTP pyrophosphatase</shortName>
        <ecNumber evidence="1">3.6.1.-</ecNumber>
    </recommendedName>
</protein>
<proteinExistence type="inferred from homology"/>
<keyword id="KW-0963">Cytoplasm</keyword>
<keyword id="KW-0378">Hydrolase</keyword>
<keyword id="KW-0546">Nucleotide metabolism</keyword>
<keyword id="KW-1185">Reference proteome</keyword>
<name>NTPPB_SACD2</name>
<comment type="function">
    <text evidence="1">Nucleoside triphosphate pyrophosphatase that hydrolyzes 7-methyl-GTP (m(7)GTP). May have a dual role in cell division arrest and in preventing the incorporation of modified nucleotides into cellular nucleic acids.</text>
</comment>
<comment type="catalytic activity">
    <reaction evidence="1">
        <text>N(7)-methyl-GTP + H2O = N(7)-methyl-GMP + diphosphate + H(+)</text>
        <dbReference type="Rhea" id="RHEA:58744"/>
        <dbReference type="ChEBI" id="CHEBI:15377"/>
        <dbReference type="ChEBI" id="CHEBI:15378"/>
        <dbReference type="ChEBI" id="CHEBI:33019"/>
        <dbReference type="ChEBI" id="CHEBI:58285"/>
        <dbReference type="ChEBI" id="CHEBI:87133"/>
    </reaction>
</comment>
<comment type="cofactor">
    <cofactor evidence="1">
        <name>a divalent metal cation</name>
        <dbReference type="ChEBI" id="CHEBI:60240"/>
    </cofactor>
</comment>
<comment type="subcellular location">
    <subcellularLocation>
        <location evidence="1">Cytoplasm</location>
    </subcellularLocation>
</comment>
<comment type="similarity">
    <text evidence="1">Belongs to the Maf family. YceF subfamily.</text>
</comment>
<evidence type="ECO:0000255" key="1">
    <source>
        <dbReference type="HAMAP-Rule" id="MF_00528"/>
    </source>
</evidence>
<dbReference type="EC" id="3.6.1.-" evidence="1"/>
<dbReference type="EMBL" id="CP000282">
    <property type="protein sequence ID" value="ABD80886.1"/>
    <property type="molecule type" value="Genomic_DNA"/>
</dbReference>
<dbReference type="RefSeq" id="WP_011468106.1">
    <property type="nucleotide sequence ID" value="NC_007912.1"/>
</dbReference>
<dbReference type="SMR" id="Q21K93"/>
<dbReference type="STRING" id="203122.Sde_1624"/>
<dbReference type="GeneID" id="98613303"/>
<dbReference type="KEGG" id="sde:Sde_1624"/>
<dbReference type="eggNOG" id="COG0424">
    <property type="taxonomic scope" value="Bacteria"/>
</dbReference>
<dbReference type="HOGENOM" id="CLU_040416_1_0_6"/>
<dbReference type="OrthoDB" id="9813694at2"/>
<dbReference type="Proteomes" id="UP000001947">
    <property type="component" value="Chromosome"/>
</dbReference>
<dbReference type="GO" id="GO:0005737">
    <property type="term" value="C:cytoplasm"/>
    <property type="evidence" value="ECO:0007669"/>
    <property type="project" value="UniProtKB-SubCell"/>
</dbReference>
<dbReference type="GO" id="GO:0047429">
    <property type="term" value="F:nucleoside triphosphate diphosphatase activity"/>
    <property type="evidence" value="ECO:0007669"/>
    <property type="project" value="InterPro"/>
</dbReference>
<dbReference type="GO" id="GO:0009117">
    <property type="term" value="P:nucleotide metabolic process"/>
    <property type="evidence" value="ECO:0007669"/>
    <property type="project" value="UniProtKB-KW"/>
</dbReference>
<dbReference type="CDD" id="cd00555">
    <property type="entry name" value="Maf"/>
    <property type="match status" value="1"/>
</dbReference>
<dbReference type="Gene3D" id="3.90.950.10">
    <property type="match status" value="1"/>
</dbReference>
<dbReference type="HAMAP" id="MF_00528">
    <property type="entry name" value="Maf"/>
    <property type="match status" value="1"/>
</dbReference>
<dbReference type="InterPro" id="IPR029001">
    <property type="entry name" value="ITPase-like_fam"/>
</dbReference>
<dbReference type="InterPro" id="IPR003697">
    <property type="entry name" value="Maf-like"/>
</dbReference>
<dbReference type="NCBIfam" id="TIGR00172">
    <property type="entry name" value="maf"/>
    <property type="match status" value="1"/>
</dbReference>
<dbReference type="PANTHER" id="PTHR43213:SF10">
    <property type="entry name" value="7-METHYL-GTP PYROPHOSPHATASE"/>
    <property type="match status" value="1"/>
</dbReference>
<dbReference type="PANTHER" id="PTHR43213">
    <property type="entry name" value="BIFUNCTIONAL DTTP/UTP PYROPHOSPHATASE/METHYLTRANSFERASE PROTEIN-RELATED"/>
    <property type="match status" value="1"/>
</dbReference>
<dbReference type="Pfam" id="PF02545">
    <property type="entry name" value="Maf"/>
    <property type="match status" value="1"/>
</dbReference>
<dbReference type="PIRSF" id="PIRSF006305">
    <property type="entry name" value="Maf"/>
    <property type="match status" value="1"/>
</dbReference>
<dbReference type="SUPFAM" id="SSF52972">
    <property type="entry name" value="ITPase-like"/>
    <property type="match status" value="1"/>
</dbReference>
<gene>
    <name type="ordered locus">Sde_1624</name>
</gene>
<feature type="chain" id="PRO_0000267416" description="7-methyl-GTP pyrophosphatase">
    <location>
        <begin position="1"/>
        <end position="197"/>
    </location>
</feature>
<feature type="active site" description="Proton acceptor" evidence="1">
    <location>
        <position position="74"/>
    </location>
</feature>
<feature type="site" description="Important for substrate specificity" evidence="1">
    <location>
        <position position="17"/>
    </location>
</feature>
<feature type="site" description="Important for substrate specificity" evidence="1">
    <location>
        <position position="75"/>
    </location>
</feature>
<feature type="site" description="Important for substrate specificity" evidence="1">
    <location>
        <position position="159"/>
    </location>
</feature>
<organism>
    <name type="scientific">Saccharophagus degradans (strain 2-40 / ATCC 43961 / DSM 17024)</name>
    <dbReference type="NCBI Taxonomy" id="203122"/>
    <lineage>
        <taxon>Bacteria</taxon>
        <taxon>Pseudomonadati</taxon>
        <taxon>Pseudomonadota</taxon>
        <taxon>Gammaproteobacteria</taxon>
        <taxon>Cellvibrionales</taxon>
        <taxon>Cellvibrionaceae</taxon>
        <taxon>Saccharophagus</taxon>
    </lineage>
</organism>
<sequence>MPSRTSANLILASQSAYRQAQLRQLGLPFTTAAAYINEEVLTGENAQQTAVRLAKTKTLKIAKEHANDYIIGCDQTAGLDDIILGKPGTEENAFNQLMQCQARTVTFYSALCVYSPENKQLIQHCTQTKVSFRELNESQIRSYIQRESPLDCAGSFKCEGLGISLFESIQSDDPSALIGLPLIALCTALQHTPFQPI</sequence>
<reference key="1">
    <citation type="journal article" date="2008" name="PLoS Genet.">
        <title>Complete genome sequence of the complex carbohydrate-degrading marine bacterium, Saccharophagus degradans strain 2-40 T.</title>
        <authorList>
            <person name="Weiner R.M."/>
            <person name="Taylor L.E. II"/>
            <person name="Henrissat B."/>
            <person name="Hauser L."/>
            <person name="Land M."/>
            <person name="Coutinho P.M."/>
            <person name="Rancurel C."/>
            <person name="Saunders E.H."/>
            <person name="Longmire A.G."/>
            <person name="Zhang H."/>
            <person name="Bayer E.A."/>
            <person name="Gilbert H.J."/>
            <person name="Larimer F."/>
            <person name="Zhulin I.B."/>
            <person name="Ekborg N.A."/>
            <person name="Lamed R."/>
            <person name="Richardson P.M."/>
            <person name="Borovok I."/>
            <person name="Hutcheson S."/>
        </authorList>
    </citation>
    <scope>NUCLEOTIDE SEQUENCE [LARGE SCALE GENOMIC DNA]</scope>
    <source>
        <strain>2-40 / ATCC 43961 / DSM 17024</strain>
    </source>
</reference>
<accession>Q21K93</accession>